<protein>
    <recommendedName>
        <fullName evidence="1">Uracil phosphoribosyltransferase</fullName>
        <ecNumber evidence="1">2.4.2.9</ecNumber>
    </recommendedName>
    <alternativeName>
        <fullName evidence="1">UMP pyrophosphorylase</fullName>
    </alternativeName>
    <alternativeName>
        <fullName evidence="1">UPRTase</fullName>
    </alternativeName>
</protein>
<sequence length="209" mass="22901">MGKLYVFDHPLIQHKITYIRDKNTGTKDFRELVDEVASLMAFEITRDLPLKDIEIETPVSKATTKVIAGKKLGLIPILRAGLGMVDGILKLIPAAKVGHVGLYRDPKTLQPVEYYVKLPTDVEERDFIVLDPMLATGGSAAEAINSLKKRGAKQIKLMCIVAAPEGVKVVQEEHPDVDIYVAALDEKLNDHGYVVPGLGDAGDRLFGTK</sequence>
<evidence type="ECO:0000255" key="1">
    <source>
        <dbReference type="HAMAP-Rule" id="MF_01218"/>
    </source>
</evidence>
<gene>
    <name evidence="1" type="primary">upp</name>
    <name type="ordered locus">BCQ_5155</name>
</gene>
<feature type="chain" id="PRO_1000164810" description="Uracil phosphoribosyltransferase">
    <location>
        <begin position="1"/>
        <end position="209"/>
    </location>
</feature>
<feature type="binding site" evidence="1">
    <location>
        <position position="79"/>
    </location>
    <ligand>
        <name>5-phospho-alpha-D-ribose 1-diphosphate</name>
        <dbReference type="ChEBI" id="CHEBI:58017"/>
    </ligand>
</feature>
<feature type="binding site" evidence="1">
    <location>
        <position position="104"/>
    </location>
    <ligand>
        <name>5-phospho-alpha-D-ribose 1-diphosphate</name>
        <dbReference type="ChEBI" id="CHEBI:58017"/>
    </ligand>
</feature>
<feature type="binding site" evidence="1">
    <location>
        <begin position="131"/>
        <end position="139"/>
    </location>
    <ligand>
        <name>5-phospho-alpha-D-ribose 1-diphosphate</name>
        <dbReference type="ChEBI" id="CHEBI:58017"/>
    </ligand>
</feature>
<feature type="binding site" evidence="1">
    <location>
        <position position="194"/>
    </location>
    <ligand>
        <name>uracil</name>
        <dbReference type="ChEBI" id="CHEBI:17568"/>
    </ligand>
</feature>
<feature type="binding site" evidence="1">
    <location>
        <begin position="199"/>
        <end position="201"/>
    </location>
    <ligand>
        <name>uracil</name>
        <dbReference type="ChEBI" id="CHEBI:17568"/>
    </ligand>
</feature>
<feature type="binding site" evidence="1">
    <location>
        <position position="200"/>
    </location>
    <ligand>
        <name>5-phospho-alpha-D-ribose 1-diphosphate</name>
        <dbReference type="ChEBI" id="CHEBI:58017"/>
    </ligand>
</feature>
<proteinExistence type="inferred from homology"/>
<dbReference type="EC" id="2.4.2.9" evidence="1"/>
<dbReference type="EMBL" id="CP000227">
    <property type="protein sequence ID" value="ACM15555.1"/>
    <property type="molecule type" value="Genomic_DNA"/>
</dbReference>
<dbReference type="SMR" id="B9IRU7"/>
<dbReference type="KEGG" id="bcq:BCQ_5155"/>
<dbReference type="HOGENOM" id="CLU_067096_2_2_9"/>
<dbReference type="UniPathway" id="UPA00574">
    <property type="reaction ID" value="UER00636"/>
</dbReference>
<dbReference type="Proteomes" id="UP000000441">
    <property type="component" value="Chromosome"/>
</dbReference>
<dbReference type="GO" id="GO:0005525">
    <property type="term" value="F:GTP binding"/>
    <property type="evidence" value="ECO:0007669"/>
    <property type="project" value="UniProtKB-KW"/>
</dbReference>
<dbReference type="GO" id="GO:0000287">
    <property type="term" value="F:magnesium ion binding"/>
    <property type="evidence" value="ECO:0007669"/>
    <property type="project" value="UniProtKB-UniRule"/>
</dbReference>
<dbReference type="GO" id="GO:0004845">
    <property type="term" value="F:uracil phosphoribosyltransferase activity"/>
    <property type="evidence" value="ECO:0007669"/>
    <property type="project" value="UniProtKB-UniRule"/>
</dbReference>
<dbReference type="GO" id="GO:0044206">
    <property type="term" value="P:UMP salvage"/>
    <property type="evidence" value="ECO:0007669"/>
    <property type="project" value="UniProtKB-UniRule"/>
</dbReference>
<dbReference type="GO" id="GO:0006223">
    <property type="term" value="P:uracil salvage"/>
    <property type="evidence" value="ECO:0007669"/>
    <property type="project" value="InterPro"/>
</dbReference>
<dbReference type="CDD" id="cd06223">
    <property type="entry name" value="PRTases_typeI"/>
    <property type="match status" value="1"/>
</dbReference>
<dbReference type="FunFam" id="3.40.50.2020:FF:000003">
    <property type="entry name" value="Uracil phosphoribosyltransferase"/>
    <property type="match status" value="1"/>
</dbReference>
<dbReference type="Gene3D" id="3.40.50.2020">
    <property type="match status" value="1"/>
</dbReference>
<dbReference type="HAMAP" id="MF_01218_B">
    <property type="entry name" value="Upp_B"/>
    <property type="match status" value="1"/>
</dbReference>
<dbReference type="InterPro" id="IPR000836">
    <property type="entry name" value="PRibTrfase_dom"/>
</dbReference>
<dbReference type="InterPro" id="IPR029057">
    <property type="entry name" value="PRTase-like"/>
</dbReference>
<dbReference type="InterPro" id="IPR034332">
    <property type="entry name" value="Upp_B"/>
</dbReference>
<dbReference type="InterPro" id="IPR050054">
    <property type="entry name" value="UPRTase/APRTase"/>
</dbReference>
<dbReference type="InterPro" id="IPR005765">
    <property type="entry name" value="Ura_phspho_trans"/>
</dbReference>
<dbReference type="NCBIfam" id="NF001097">
    <property type="entry name" value="PRK00129.1"/>
    <property type="match status" value="1"/>
</dbReference>
<dbReference type="NCBIfam" id="TIGR01091">
    <property type="entry name" value="upp"/>
    <property type="match status" value="1"/>
</dbReference>
<dbReference type="PANTHER" id="PTHR32315">
    <property type="entry name" value="ADENINE PHOSPHORIBOSYLTRANSFERASE"/>
    <property type="match status" value="1"/>
</dbReference>
<dbReference type="PANTHER" id="PTHR32315:SF4">
    <property type="entry name" value="URACIL PHOSPHORIBOSYLTRANSFERASE, CHLOROPLASTIC"/>
    <property type="match status" value="1"/>
</dbReference>
<dbReference type="Pfam" id="PF14681">
    <property type="entry name" value="UPRTase"/>
    <property type="match status" value="1"/>
</dbReference>
<dbReference type="SUPFAM" id="SSF53271">
    <property type="entry name" value="PRTase-like"/>
    <property type="match status" value="1"/>
</dbReference>
<reference key="1">
    <citation type="journal article" date="2009" name="J. Bacteriol.">
        <title>Complete genome sequence of the extremophilic Bacillus cereus strain Q1 with industrial applications.</title>
        <authorList>
            <person name="Xiong Z."/>
            <person name="Jiang Y."/>
            <person name="Qi D."/>
            <person name="Lu H."/>
            <person name="Yang F."/>
            <person name="Yang J."/>
            <person name="Chen L."/>
            <person name="Sun L."/>
            <person name="Xu X."/>
            <person name="Xue Y."/>
            <person name="Zhu Y."/>
            <person name="Jin Q."/>
        </authorList>
    </citation>
    <scope>NUCLEOTIDE SEQUENCE [LARGE SCALE GENOMIC DNA]</scope>
    <source>
        <strain>Q1</strain>
    </source>
</reference>
<comment type="function">
    <text evidence="1">Catalyzes the conversion of uracil and 5-phospho-alpha-D-ribose 1-diphosphate (PRPP) to UMP and diphosphate.</text>
</comment>
<comment type="catalytic activity">
    <reaction evidence="1">
        <text>UMP + diphosphate = 5-phospho-alpha-D-ribose 1-diphosphate + uracil</text>
        <dbReference type="Rhea" id="RHEA:13017"/>
        <dbReference type="ChEBI" id="CHEBI:17568"/>
        <dbReference type="ChEBI" id="CHEBI:33019"/>
        <dbReference type="ChEBI" id="CHEBI:57865"/>
        <dbReference type="ChEBI" id="CHEBI:58017"/>
        <dbReference type="EC" id="2.4.2.9"/>
    </reaction>
</comment>
<comment type="cofactor">
    <cofactor evidence="1">
        <name>Mg(2+)</name>
        <dbReference type="ChEBI" id="CHEBI:18420"/>
    </cofactor>
    <text evidence="1">Binds 1 Mg(2+) ion per subunit. The magnesium is bound as Mg-PRPP.</text>
</comment>
<comment type="activity regulation">
    <text evidence="1">Allosterically activated by GTP.</text>
</comment>
<comment type="pathway">
    <text evidence="1">Pyrimidine metabolism; UMP biosynthesis via salvage pathway; UMP from uracil: step 1/1.</text>
</comment>
<comment type="similarity">
    <text evidence="1">Belongs to the UPRTase family.</text>
</comment>
<organism>
    <name type="scientific">Bacillus cereus (strain Q1)</name>
    <dbReference type="NCBI Taxonomy" id="361100"/>
    <lineage>
        <taxon>Bacteria</taxon>
        <taxon>Bacillati</taxon>
        <taxon>Bacillota</taxon>
        <taxon>Bacilli</taxon>
        <taxon>Bacillales</taxon>
        <taxon>Bacillaceae</taxon>
        <taxon>Bacillus</taxon>
        <taxon>Bacillus cereus group</taxon>
    </lineage>
</organism>
<keyword id="KW-0021">Allosteric enzyme</keyword>
<keyword id="KW-0328">Glycosyltransferase</keyword>
<keyword id="KW-0342">GTP-binding</keyword>
<keyword id="KW-0460">Magnesium</keyword>
<keyword id="KW-0547">Nucleotide-binding</keyword>
<keyword id="KW-0808">Transferase</keyword>
<accession>B9IRU7</accession>
<name>UPP_BACCQ</name>